<evidence type="ECO:0000250" key="1">
    <source>
        <dbReference type="UniProtKB" id="P82908"/>
    </source>
</evidence>
<evidence type="ECO:0000250" key="2">
    <source>
        <dbReference type="UniProtKB" id="Q9CQX8"/>
    </source>
</evidence>
<evidence type="ECO:0000256" key="3">
    <source>
        <dbReference type="SAM" id="MobiDB-lite"/>
    </source>
</evidence>
<evidence type="ECO:0000269" key="4">
    <source>
    </source>
</evidence>
<evidence type="ECO:0000305" key="5"/>
<evidence type="ECO:0000312" key="6">
    <source>
        <dbReference type="EMBL" id="AAG44788.1"/>
    </source>
</evidence>
<evidence type="ECO:0000312" key="7">
    <source>
        <dbReference type="HGNC" id="HGNC:16631"/>
    </source>
</evidence>
<evidence type="ECO:0007744" key="8">
    <source>
    </source>
</evidence>
<evidence type="ECO:0007744" key="9">
    <source>
    </source>
</evidence>
<evidence type="ECO:0007744" key="10">
    <source>
    </source>
</evidence>
<evidence type="ECO:0007744" key="11">
    <source>
    </source>
</evidence>
<proteinExistence type="evidence at protein level"/>
<reference evidence="6" key="1">
    <citation type="submission" date="2000-05" db="EMBL/GenBank/DDBJ databases">
        <authorList>
            <person name="Xu X."/>
            <person name="Yang Y."/>
            <person name="Gao G."/>
            <person name="Xiao H."/>
            <person name="Chen Z."/>
            <person name="Han Z."/>
        </authorList>
    </citation>
    <scope>NUCLEOTIDE SEQUENCE [LARGE SCALE MRNA]</scope>
    <source>
        <tissue>Dendritic cell</tissue>
    </source>
</reference>
<reference key="2">
    <citation type="journal article" date="2004" name="Genome Res.">
        <title>The status, quality, and expansion of the NIH full-length cDNA project: the Mammalian Gene Collection (MGC).</title>
        <authorList>
            <consortium name="The MGC Project Team"/>
        </authorList>
    </citation>
    <scope>NUCLEOTIDE SEQUENCE [LARGE SCALE MRNA]</scope>
    <source>
        <tissue>Kidney</tissue>
        <tissue>Prostate</tissue>
    </source>
</reference>
<reference evidence="5" key="3">
    <citation type="journal article" date="2001" name="J. Biol. Chem.">
        <title>The small subunit of the mammalian mitochondrial ribosome: identification of the full complement of ribosomal proteins present.</title>
        <authorList>
            <person name="Koc E.C."/>
            <person name="Burkhart W."/>
            <person name="Blackburn K."/>
            <person name="Moseley A."/>
            <person name="Spremulli L.L."/>
        </authorList>
    </citation>
    <scope>IDENTIFICATION</scope>
</reference>
<reference key="4">
    <citation type="journal article" date="2008" name="Proc. Natl. Acad. Sci. U.S.A.">
        <title>A quantitative atlas of mitotic phosphorylation.</title>
        <authorList>
            <person name="Dephoure N."/>
            <person name="Zhou C."/>
            <person name="Villen J."/>
            <person name="Beausoleil S.A."/>
            <person name="Bakalarski C.E."/>
            <person name="Elledge S.J."/>
            <person name="Gygi S.P."/>
        </authorList>
    </citation>
    <scope>PHOSPHORYLATION [LARGE SCALE ANALYSIS] AT SER-61</scope>
    <scope>IDENTIFICATION BY MASS SPECTROMETRY [LARGE SCALE ANALYSIS]</scope>
    <source>
        <tissue>Cervix carcinoma</tissue>
    </source>
</reference>
<reference key="5">
    <citation type="journal article" date="2010" name="Sci. Signal.">
        <title>Quantitative phosphoproteomics reveals widespread full phosphorylation site occupancy during mitosis.</title>
        <authorList>
            <person name="Olsen J.V."/>
            <person name="Vermeulen M."/>
            <person name="Santamaria A."/>
            <person name="Kumar C."/>
            <person name="Miller M.L."/>
            <person name="Jensen L.J."/>
            <person name="Gnad F."/>
            <person name="Cox J."/>
            <person name="Jensen T.S."/>
            <person name="Nigg E.A."/>
            <person name="Brunak S."/>
            <person name="Mann M."/>
        </authorList>
    </citation>
    <scope>IDENTIFICATION BY MASS SPECTROMETRY [LARGE SCALE ANALYSIS]</scope>
    <source>
        <tissue>Cervix carcinoma</tissue>
    </source>
</reference>
<reference key="6">
    <citation type="journal article" date="2011" name="BMC Syst. Biol.">
        <title>Initial characterization of the human central proteome.</title>
        <authorList>
            <person name="Burkard T.R."/>
            <person name="Planyavsky M."/>
            <person name="Kaupe I."/>
            <person name="Breitwieser F.P."/>
            <person name="Buerckstuemmer T."/>
            <person name="Bennett K.L."/>
            <person name="Superti-Furga G."/>
            <person name="Colinge J."/>
        </authorList>
    </citation>
    <scope>IDENTIFICATION BY MASS SPECTROMETRY [LARGE SCALE ANALYSIS]</scope>
</reference>
<reference key="7">
    <citation type="journal article" date="2012" name="Proc. Natl. Acad. Sci. U.S.A.">
        <title>N-terminal acetylome analyses and functional insights of the N-terminal acetyltransferase NatB.</title>
        <authorList>
            <person name="Van Damme P."/>
            <person name="Lasa M."/>
            <person name="Polevoda B."/>
            <person name="Gazquez C."/>
            <person name="Elosegui-Artola A."/>
            <person name="Kim D.S."/>
            <person name="De Juan-Pardo E."/>
            <person name="Demeyer K."/>
            <person name="Hole K."/>
            <person name="Larrea E."/>
            <person name="Timmerman E."/>
            <person name="Prieto J."/>
            <person name="Arnesen T."/>
            <person name="Sherman F."/>
            <person name="Gevaert K."/>
            <person name="Aldabe R."/>
        </authorList>
    </citation>
    <scope>ACETYLATION [LARGE SCALE ANALYSIS] AT MET-1</scope>
    <scope>IDENTIFICATION BY MASS SPECTROMETRY [LARGE SCALE ANALYSIS]</scope>
</reference>
<reference key="8">
    <citation type="journal article" date="2013" name="J. Proteome Res.">
        <title>Toward a comprehensive characterization of a human cancer cell phosphoproteome.</title>
        <authorList>
            <person name="Zhou H."/>
            <person name="Di Palma S."/>
            <person name="Preisinger C."/>
            <person name="Peng M."/>
            <person name="Polat A.N."/>
            <person name="Heck A.J."/>
            <person name="Mohammed S."/>
        </authorList>
    </citation>
    <scope>PHOSPHORYLATION [LARGE SCALE ANALYSIS] AT SER-90</scope>
    <scope>IDENTIFICATION BY MASS SPECTROMETRY [LARGE SCALE ANALYSIS]</scope>
    <source>
        <tissue>Erythroleukemia</tissue>
    </source>
</reference>
<reference key="9">
    <citation type="journal article" date="2014" name="J. Proteomics">
        <title>An enzyme assisted RP-RPLC approach for in-depth analysis of human liver phosphoproteome.</title>
        <authorList>
            <person name="Bian Y."/>
            <person name="Song C."/>
            <person name="Cheng K."/>
            <person name="Dong M."/>
            <person name="Wang F."/>
            <person name="Huang J."/>
            <person name="Sun D."/>
            <person name="Wang L."/>
            <person name="Ye M."/>
            <person name="Zou H."/>
        </authorList>
    </citation>
    <scope>PHOSPHORYLATION [LARGE SCALE ANALYSIS] AT SER-49</scope>
    <scope>IDENTIFICATION BY MASS SPECTROMETRY [LARGE SCALE ANALYSIS]</scope>
    <source>
        <tissue>Liver</tissue>
    </source>
</reference>
<reference key="10">
    <citation type="journal article" date="2015" name="Proteomics">
        <title>N-terminome analysis of the human mitochondrial proteome.</title>
        <authorList>
            <person name="Vaca Jacome A.S."/>
            <person name="Rabilloud T."/>
            <person name="Schaeffer-Reiss C."/>
            <person name="Rompais M."/>
            <person name="Ayoub D."/>
            <person name="Lane L."/>
            <person name="Bairoch A."/>
            <person name="Van Dorsselaer A."/>
            <person name="Carapito C."/>
        </authorList>
    </citation>
    <scope>IDENTIFICATION BY MASS SPECTROMETRY [LARGE SCALE ANALYSIS]</scope>
</reference>
<reference key="11">
    <citation type="journal article" date="2015" name="Science">
        <title>Ribosome. The structure of the human mitochondrial ribosome.</title>
        <authorList>
            <person name="Amunts A."/>
            <person name="Brown A."/>
            <person name="Toots J."/>
            <person name="Scheres S.H."/>
            <person name="Ramakrishnan V."/>
        </authorList>
    </citation>
    <scope>LACK OF IDENTIFICATION IN MITOCHONDRIAL RIBOSOME</scope>
</reference>
<sequence>MMGSKMASASRVVQVVKPHTPLIRFPDRRDNPKPNVSEALRSAGLPSHSSVISQHSKGSKSPDLLMYQGPPDTAEIIKTLPQKYRRKLVSQEEMEFIQRGGPE</sequence>
<comment type="function">
    <text evidence="2">Molecular adapter that is necessary to form a stable 2-oxoglutarate dehydrogenase enzyme complex (OGDHC). Enables the specific recruitment of E3 subunit to E2 subunit in the 2-oxoglutarate dehydrogenase complex (OGDHC).</text>
</comment>
<comment type="subunit">
    <text evidence="2">Component of the 2-oxoglutarate dehydrogenase complex (OGDHC), composed of OGDH (2-oxoglutarate dehydrogenase; also called E1 subunit), DLST (dihydrolipoamide succinyltransferase; also called E2 subunit) and DLD (dihydrolipoamide dehydrogenase; also called E3 subunit), and the assembly factor KGD4. Within OGDHC complex, interacts (via N-terminus) with E3 subunit and (via C-terminus) with E2 subunit.</text>
</comment>
<comment type="subcellular location">
    <subcellularLocation>
        <location evidence="1">Mitochondrion</location>
    </subcellularLocation>
</comment>
<comment type="similarity">
    <text evidence="5">Belongs to the alpha-ketoglutarate dehydrogenase component 4 family.</text>
</comment>
<comment type="caution">
    <text evidence="1 2 4">Was originally identified in the small subunit (28S) of mitochondrial ribosomes that were purified on sucrose gradients (By similarity). This observation has been challenged by experiments showing KGD4 copurification with the oxoglutarate dehydrogenase complex (OGDHC), also called alpha-ketoglutarate dehydrogenase complex (KGDH). Both mitochondrial ribosome 28S subunit and OGDC have a similar size and OGDC is highly abundant, therefore OGDC has been found to contaminate ribosomal preparations performed by sequential centrifugation steps (By similarity). In addition, KGD4 could not be located in the structure of the human mitochondrial ribosome, supporting the hypothesis that it is not a mitoribosomal protein (PubMed:25838379).</text>
</comment>
<keyword id="KW-0007">Acetylation</keyword>
<keyword id="KW-0496">Mitochondrion</keyword>
<keyword id="KW-0597">Phosphoprotein</keyword>
<keyword id="KW-1267">Proteomics identification</keyword>
<keyword id="KW-1185">Reference proteome</keyword>
<keyword id="KW-0816">Tricarboxylic acid cycle</keyword>
<feature type="chain" id="PRO_0000087733" description="Alpha-ketoglutarate dehydrogenase component 4">
    <location>
        <begin position="1"/>
        <end position="103"/>
    </location>
</feature>
<feature type="region of interest" description="Disordered" evidence="3">
    <location>
        <begin position="20"/>
        <end position="69"/>
    </location>
</feature>
<feature type="compositionally biased region" description="Polar residues" evidence="3">
    <location>
        <begin position="47"/>
        <end position="56"/>
    </location>
</feature>
<feature type="modified residue" description="N-acetylmethionine" evidence="9">
    <location>
        <position position="1"/>
    </location>
</feature>
<feature type="modified residue" description="N6-succinyllysine" evidence="2">
    <location>
        <position position="5"/>
    </location>
</feature>
<feature type="modified residue" description="Phosphoserine" evidence="11">
    <location>
        <position position="49"/>
    </location>
</feature>
<feature type="modified residue" description="Phosphoserine" evidence="8">
    <location>
        <position position="61"/>
    </location>
</feature>
<feature type="modified residue" description="Phosphoserine" evidence="10">
    <location>
        <position position="90"/>
    </location>
</feature>
<dbReference type="EMBL" id="AF271777">
    <property type="protein sequence ID" value="AAG44788.1"/>
    <property type="molecule type" value="mRNA"/>
</dbReference>
<dbReference type="EMBL" id="BC015966">
    <property type="protein sequence ID" value="AAH15966.1"/>
    <property type="molecule type" value="mRNA"/>
</dbReference>
<dbReference type="EMBL" id="BC017900">
    <property type="protein sequence ID" value="AAH17900.1"/>
    <property type="molecule type" value="mRNA"/>
</dbReference>
<dbReference type="CCDS" id="CCDS34174.1"/>
<dbReference type="RefSeq" id="NP_150597.1">
    <property type="nucleotide sequence ID" value="NM_033281.6"/>
</dbReference>
<dbReference type="SMR" id="P82909"/>
<dbReference type="BioGRID" id="124924">
    <property type="interactions" value="110"/>
</dbReference>
<dbReference type="ComplexPortal" id="CPX-9061">
    <property type="entry name" value="Mitochondrial 2-oxoglutarate dehydrogenase complex"/>
</dbReference>
<dbReference type="CORUM" id="P82909"/>
<dbReference type="FunCoup" id="P82909">
    <property type="interactions" value="547"/>
</dbReference>
<dbReference type="IntAct" id="P82909">
    <property type="interactions" value="30"/>
</dbReference>
<dbReference type="MINT" id="P82909"/>
<dbReference type="STRING" id="9606.ENSP00000256441"/>
<dbReference type="GlyCosmos" id="P82909">
    <property type="glycosylation" value="1 site, 1 glycan"/>
</dbReference>
<dbReference type="GlyGen" id="P82909">
    <property type="glycosylation" value="1 site, 1 O-linked glycan (1 site)"/>
</dbReference>
<dbReference type="iPTMnet" id="P82909"/>
<dbReference type="PhosphoSitePlus" id="P82909"/>
<dbReference type="SwissPalm" id="P82909"/>
<dbReference type="BioMuta" id="MRPS36"/>
<dbReference type="DMDM" id="41688617"/>
<dbReference type="jPOST" id="P82909"/>
<dbReference type="MassIVE" id="P82909"/>
<dbReference type="PaxDb" id="9606-ENSP00000256441"/>
<dbReference type="PeptideAtlas" id="P82909"/>
<dbReference type="ProteomicsDB" id="57716"/>
<dbReference type="Pumba" id="P82909"/>
<dbReference type="TopDownProteomics" id="P82909"/>
<dbReference type="Antibodypedia" id="23923">
    <property type="antibodies" value="183 antibodies from 28 providers"/>
</dbReference>
<dbReference type="DNASU" id="92259"/>
<dbReference type="Ensembl" id="ENST00000256441.5">
    <property type="protein sequence ID" value="ENSP00000256441.4"/>
    <property type="gene ID" value="ENSG00000134056.12"/>
</dbReference>
<dbReference type="Ensembl" id="ENST00000613100.1">
    <property type="protein sequence ID" value="ENSP00000482331.1"/>
    <property type="gene ID" value="ENSG00000278461.4"/>
</dbReference>
<dbReference type="GeneID" id="92259"/>
<dbReference type="KEGG" id="hsa:92259"/>
<dbReference type="MANE-Select" id="ENST00000256441.5">
    <property type="protein sequence ID" value="ENSP00000256441.4"/>
    <property type="RefSeq nucleotide sequence ID" value="NM_033281.6"/>
    <property type="RefSeq protein sequence ID" value="NP_150597.1"/>
</dbReference>
<dbReference type="UCSC" id="uc003jvq.4">
    <property type="organism name" value="human"/>
</dbReference>
<dbReference type="AGR" id="HGNC:16631"/>
<dbReference type="CTD" id="92259"/>
<dbReference type="DisGeNET" id="92259"/>
<dbReference type="GeneCards" id="KGD4"/>
<dbReference type="HGNC" id="HGNC:16631">
    <property type="gene designation" value="KGD4"/>
</dbReference>
<dbReference type="HPA" id="ENSG00000134056">
    <property type="expression patterns" value="Low tissue specificity"/>
</dbReference>
<dbReference type="MIM" id="611996">
    <property type="type" value="gene"/>
</dbReference>
<dbReference type="neXtProt" id="NX_P82909"/>
<dbReference type="OpenTargets" id="ENSG00000134056"/>
<dbReference type="PharmGKB" id="PA31023"/>
<dbReference type="VEuPathDB" id="HostDB:ENSG00000134056"/>
<dbReference type="eggNOG" id="ENOG502S7A7">
    <property type="taxonomic scope" value="Eukaryota"/>
</dbReference>
<dbReference type="GeneTree" id="ENSGT00390000017443"/>
<dbReference type="HOGENOM" id="CLU_135102_0_0_1"/>
<dbReference type="InParanoid" id="P82909"/>
<dbReference type="OMA" id="MSQHSKG"/>
<dbReference type="OrthoDB" id="2116030at2759"/>
<dbReference type="PAN-GO" id="P82909">
    <property type="GO annotations" value="2 GO annotations based on evolutionary models"/>
</dbReference>
<dbReference type="PhylomeDB" id="P82909"/>
<dbReference type="TreeFam" id="TF333436"/>
<dbReference type="PathwayCommons" id="P82909"/>
<dbReference type="Reactome" id="R-HSA-5368286">
    <property type="pathway name" value="Mitochondrial translation initiation"/>
</dbReference>
<dbReference type="Reactome" id="R-HSA-5389840">
    <property type="pathway name" value="Mitochondrial translation elongation"/>
</dbReference>
<dbReference type="Reactome" id="R-HSA-5419276">
    <property type="pathway name" value="Mitochondrial translation termination"/>
</dbReference>
<dbReference type="Reactome" id="R-HSA-6783984">
    <property type="pathway name" value="Glycine degradation"/>
</dbReference>
<dbReference type="Reactome" id="R-HSA-9853506">
    <property type="pathway name" value="OGDH complex synthesizes succinyl-CoA from 2-OG"/>
</dbReference>
<dbReference type="SignaLink" id="P82909"/>
<dbReference type="BioGRID-ORCS" id="92259">
    <property type="hits" value="39 hits in 1080 CRISPR screens"/>
</dbReference>
<dbReference type="CD-CODE" id="FB4E32DD">
    <property type="entry name" value="Presynaptic clusters and postsynaptic densities"/>
</dbReference>
<dbReference type="ChiTaRS" id="MRPS36">
    <property type="organism name" value="human"/>
</dbReference>
<dbReference type="GenomeRNAi" id="92259"/>
<dbReference type="Pharos" id="P82909">
    <property type="development level" value="Tbio"/>
</dbReference>
<dbReference type="PRO" id="PR:P82909"/>
<dbReference type="Proteomes" id="UP000005640">
    <property type="component" value="Chromosome 5"/>
</dbReference>
<dbReference type="RNAct" id="P82909">
    <property type="molecule type" value="protein"/>
</dbReference>
<dbReference type="Bgee" id="ENSG00000134056">
    <property type="expression patterns" value="Expressed in apex of heart and 101 other cell types or tissues"/>
</dbReference>
<dbReference type="ExpressionAtlas" id="P82909">
    <property type="expression patterns" value="baseline and differential"/>
</dbReference>
<dbReference type="GO" id="GO:0005743">
    <property type="term" value="C:mitochondrial inner membrane"/>
    <property type="evidence" value="ECO:0000304"/>
    <property type="project" value="Reactome"/>
</dbReference>
<dbReference type="GO" id="GO:0005739">
    <property type="term" value="C:mitochondrion"/>
    <property type="evidence" value="ECO:0000314"/>
    <property type="project" value="HPA"/>
</dbReference>
<dbReference type="GO" id="GO:0045252">
    <property type="term" value="C:oxoglutarate dehydrogenase complex"/>
    <property type="evidence" value="ECO:0000250"/>
    <property type="project" value="UniProtKB"/>
</dbReference>
<dbReference type="GO" id="GO:0030674">
    <property type="term" value="F:protein-macromolecule adaptor activity"/>
    <property type="evidence" value="ECO:0007669"/>
    <property type="project" value="Ensembl"/>
</dbReference>
<dbReference type="GO" id="GO:0006103">
    <property type="term" value="P:2-oxoglutarate metabolic process"/>
    <property type="evidence" value="ECO:0000250"/>
    <property type="project" value="UniProtKB"/>
</dbReference>
<dbReference type="GO" id="GO:0006099">
    <property type="term" value="P:tricarboxylic acid cycle"/>
    <property type="evidence" value="ECO:0000266"/>
    <property type="project" value="UniProtKB"/>
</dbReference>
<dbReference type="InterPro" id="IPR020373">
    <property type="entry name" value="Kgd4/YMR-31"/>
</dbReference>
<dbReference type="PANTHER" id="PTHR31601">
    <property type="entry name" value="28S RIBOSOMAL PROTEIN S36, MITOCHONDRIAL"/>
    <property type="match status" value="1"/>
</dbReference>
<dbReference type="PANTHER" id="PTHR31601:SF2">
    <property type="entry name" value="ALPHA-KETOGLUTARATE DEHYDROGENASE COMPONENT 4"/>
    <property type="match status" value="1"/>
</dbReference>
<gene>
    <name evidence="7" type="primary">KGD4</name>
    <name type="synonym">MRPS36</name>
    <name type="ORF">DC47</name>
</gene>
<name>KGD4_HUMAN</name>
<protein>
    <recommendedName>
        <fullName evidence="2">Alpha-ketoglutarate dehydrogenase component 4</fullName>
    </recommendedName>
    <alternativeName>
        <fullName evidence="7">Alpha-ketoglutarate dehydrogenase subunit 4</fullName>
    </alternativeName>
</protein>
<organism evidence="6">
    <name type="scientific">Homo sapiens</name>
    <name type="common">Human</name>
    <dbReference type="NCBI Taxonomy" id="9606"/>
    <lineage>
        <taxon>Eukaryota</taxon>
        <taxon>Metazoa</taxon>
        <taxon>Chordata</taxon>
        <taxon>Craniata</taxon>
        <taxon>Vertebrata</taxon>
        <taxon>Euteleostomi</taxon>
        <taxon>Mammalia</taxon>
        <taxon>Eutheria</taxon>
        <taxon>Euarchontoglires</taxon>
        <taxon>Primates</taxon>
        <taxon>Haplorrhini</taxon>
        <taxon>Catarrhini</taxon>
        <taxon>Hominidae</taxon>
        <taxon>Homo</taxon>
    </lineage>
</organism>
<accession>P82909</accession>
<accession>Q9H2H4</accession>